<organism>
    <name type="scientific">Chlamydomonas reinhardtii</name>
    <name type="common">Chlamydomonas smithii</name>
    <dbReference type="NCBI Taxonomy" id="3055"/>
    <lineage>
        <taxon>Eukaryota</taxon>
        <taxon>Viridiplantae</taxon>
        <taxon>Chlorophyta</taxon>
        <taxon>core chlorophytes</taxon>
        <taxon>Chlorophyceae</taxon>
        <taxon>CS clade</taxon>
        <taxon>Chlamydomonadales</taxon>
        <taxon>Chlamydomonadaceae</taxon>
        <taxon>Chlamydomonas</taxon>
    </lineage>
</organism>
<sequence>MSSDSRKTFVVTTIACAIAPAGQQDQYAAYLGQDENGAIASFLDSTQNTLQAGVSGLGTGQLQLKLSNAAEFPEGCEFSVVLSKLRAGPIRTEDVPAGVAVATVAHSPLSSLYHTLKDVYSPLIKSQTAEGVPVLDKRLSELLAQVQAGLGTAVRKGVPASAQEVADPNQAPLQEVVTPLDEINFWAELTNSPNAGPIKSSALQVSSALEPLRQSFEQLSSDAPEGEGGSIGWEGAKELVDLTTNALRAAWPVKLPIGGWAMGQKRADNFLRVVGAALATYVQRRVDRLAAAGRGDLWSAPFGEVRAVLVGASGLMTRWVQESTALVEDWRLGVDTGGHDWEGAAFADAYVRSFQERLEEIYNMREMVDELAKLVGREEAGSLGVQQVFAPFQGLQALQVSDFNTHVWKAAHEDFERRMGPIEQRISQKLKELFASVIIPSLTSAIGPGRGGDRAAAGGSLIQPQQVFAEIKRYSSLMGRKNIASALQSEKETLAKQVDRHLDSVQAEFDAHRDSATGGAKVAPVGRVTASIVERIMWCMQTLQKLGKVSEVLKHMLRGGVAGDEGSGGAALRNTLGVVSELQKEVEIFRKEQYSAWEEWMSEELGEMANWKNSKLMTFDSQNSHVKTHFNDQLVLLLREVRQLQSLGFGVRKDILNEVEIANKFYRYGMVLKQRANFYNNIATEMVQCQKPMMLKDALDFEKVLMNPKDAQGKEITWRNAAALDGYVRRLNEVADRLAEKNRTLRKWHSVLSDKVVTLAGTDLVRHKDKWAAGVKEMREIFGRLEAEGYSRESQQVWRQHWDFQLYKALEVQYLSGLEMINKTLPEVEVKMVFRQHRLQYDPPLEELRIRHVKDLLNTFLGLPLRMKGVSDLSERPGFFRPIVDANPTGIARVYAAAESLFTQLADELKKYQDWMVLGTLDLDEFADANLLEVSDWELNFRMLKAASRDAEKLPNEIRIECYKVSLAPVKGSIDEHMKKLQDTLVASLRRKTVAEKDQIEDFMKNGRELFTRQANTVEDIGLAGQEAKGLTAKLAEVQAARRRIDEKNKLLRQMAGGGRDAAFAVVDLTEVNNSWDAFTNQLQQFDAHLEEQKGNLAVQISRQLEEFKGKVAGMNSRWQELKPKSGPSGNPAVVLAKIQEYANAIKELREESAKLYKEAEAFKIDVPDFELMTEMETDVMATKAHWDRYADFLRERDEMANRDWLSMRDQVWKIEDFLAKWTKATAGKSDDPIAVILTQEIDNYTLCLPHLKSCLRGAGWEDTHWNQLFGLLGMKTSGPAAVSKETVTLTHFLEKADLVVKHADVIKSLDAQAQGEAVIRKALTELKMWGMAREFTFTESTQSVAGRQRRTPLIKEWRDAMTEVGDNQSLVASLKQSSYYNMFKDEVSSWENKLSFLQEGLTLLNQIQRKWVYLEPIFGRGALPSQQQRFRNVDEEFRRTMTSLESTKKVVTFADIPGIRDKLPQMAQQLDVCQRALADFLEEKRSQFPRFYFLGDDDLLEILGQARNPAVIQSHLKKLFAGIQKVKFSQDQSTIQAMQSMEGEVVDLAPTVRITEQIETWLGDLTRSMKNTLQQQNEVLCAGRMNDEFRAAASQCLQLKEAVAFTEKAEVALKAGSSGLAKLVTEMRAQLMKLTGSDFTGHHLLQLKKQALVLDFIHYCDVAEYLAKDKIGGTTEWGWTRQLRYYHRAEGSVKVAMAEATFDYTWEYQGNAAKLVYTPLTDKCYLTLTQGMALGYGGNPYGPAGTGKTESVKALGQALARQVLVFNCDEEFDFKSMGRIFVGLVKCGAWGCFDEFNRLDEEVLSAVSQQIQTIQLALKEGAKTMMFMDKTVEVDKNAGIFVTLNPAGKGYGGRSKLPDNLKQLFRSIAMTVPNNELIAEVLLLSEGFNHAKDLARKLVSLFSLSRELLSPQQHYDWGLRALKTVLGIAGRELRDARKAGQNVDAEIEAEIIIRSVAATKLPTLTFDDNSRFKALINDLFPGAKLTDARNEALEKALAEAAAACKMELTQQQIDRMLQLHLACEQRIGVIIVGPSGSGKSTLWELLEKAYERLGRKPIVYKMNPKAMPRQQLLGSMNMDTREWSDGVLTAAARKVVKEPLEQRSWIICDGDVDPEWIESLNSVLDDNRLLTMPNGERIQFANNVNFIFECHSLEFASPATVSRCGMLFMSDEAMEVERMLQRWLKVQATDNGDPGQMQSWMNDFFDKAFQWALSHPRAVETTKGGILDSGLSHLKLGPGSKQEFMAGLCRGLGSNMNPDIRNQFYNDMARMSGEGGIMDVGVATDPLIVLGDELRERGMDEADGGLVVTPEVTQNLLMMAPWFKNRDPFLVVGPEGCGKGALLDYCFKRIMGVQVAVVNCSAQTSAANVVQKLVQVCGKPVTTTSGKALRPPDNTRVILYLKDLNLPRPDKYNTCQLISFLQQLIAHHGYYDENLDFIRVERVQIVGSMTPPGSVGRHALSTRFTALVRIVTMGYPDRENLATIYTNMAQRVLANSKTASSVSPAALSKAMLEVYSSVRERFTPNDYPHYEFNARELSDWINGIQRYSLEGGLTLVQAIAHEGLRVFRDRLVGDHQEQFTSMLYGTLTSLLGYKPDATPWYTSTLGASAEERISGDLTKIKMLRWEQDTFAELVAEKLKGYEREHKELNLLLFPEVLERVSRFDRVLSQQGGSLLLCGNSGVGRRSLMLLLAYMHNMDFITPKMTKNYDLKSFRNDLKEVLRRAGVEAKPVMLFLEDHQLVNNAFLELVNSLLSGGEVPGLFTPEELAKELAPLDKARDEDPLYTGPSNSYAFFSYRIRRNLHIVVSMDPSNEMFRSRCEANPALFTRCSVQWLEGWSVKGLQQIAAARLTELVESSPELMKLGRDKLINHMIHIHASSGSQTTREYLALVSLYGQIYNRKRTQVLEQQNFLKGGLGKLAEAAVTVDTLSAEAEKQRVVLKAKQAEADEALVHIQDSMLKAADRRKEVEVLKKRTAIEEVEMKERRVKVEEELSEVQPLIDAARKAVGNIKKDNIAEIRSLKMPPDAIRDVLEGVLMVLGQQDTSWNNMKTFLGKGSVKDDIINYDAHKITPEIRARCAKLLAAKGNSFEDAVIRRVSVAAAPMAQWFKANLEFSKVLERVSPLESELHRLQSSLEESQRLIKQYEEELVQLDAAVASLKAEFSKKTSEAETLKISVDKAESVLSSARQLLDGLRGEKVRWEITVGTLGEQLKELPLSSLLAAAFITYLPSHPEEHRLKVTKDWCAYLGAAEFDVTRFLSSESEMLKWKAEGLPADGLSAQNAVVILNSTSRSPLIIDPSTQASEWLKSHLRVTGQNVEVTTMADQRFTTTLELAVRFGKTLVVAEVDKVEPILYPLLRMDLDRQGPRFVVQIGDKATDYNDTFRLFLVTRNPDPYLPPDARSLLAVTNFTVTRSGLEGQLLGLTLQKERPELEEQKSTMLRQEDECKVALAELERNLLQTLATSTGNILENKDLLDKLNETKTRSATVEKALTESKTLQASLDQQREVYRPIAARGSVMYFLLADLQALNQMYTFSLSVFLNLFKKALDRDTPPGGDVTARIALLAESLLELVFAYVSRSLFNADRLTFGMHMARHLQPSLFPEAQWAFFLGKPVPDSASPPPKPSWVREEQAGAFSALAAAFPQLVAAAELADSALWAQWASGATDALPGKIAGGKVNPFQQLLLVKAFRPDRLQSAMSSFICGTLNIKSVSPPPFSLKALIEGETRPDEPVLFITTPGADPSQELSEYAAQTMGKERWYFEVAMGQGQAEKAVTLLRECAKNGDWLVLKNVHLAVSWLPSLEKELLMLQKHDNFRIFLTSEPHPKFPSTLLEMSLKVTFEAPPGMKKNLQRTYEAWSAEYLASGPPIRAQLLFVLAWFHAVVQERRTYIPQGWTKFYEFSFADLRSGMDVITLATRAGTAPQWPLLLGLLDDAIYGGRLDNPFDSQVLLTFLRRLFSAETVGAAGGKVRPLPGSKVVVPTTNHRADYVSIISALPDVDTPGLFCMPDNIDRTAQQVNSARVISQLKAMSLRADAAGGFNRAQWQAQLGPLLRLWDQLMSGASALKAAMKDIRARGTTDKGGAPIENFVALERYKGASLVALIDRTLGAIARVLKGTDTLSSGVQSSGAALLADVIPGSWDAAWEGPEAPMDYCRAVVAKALAIEGHWARCQQPGGGGLLDGSGGAGPLELSSVFHPGTFLNALRQQSARTLGCSMDMLKAVTSWETAKLKAAAGGAPVALLGGLIMQGATFDGSRLSPVAAEAPAFRAVPAMSMAWLHKDSPMAYASYMEAPLYMTSDRSKLLARVQLPVSGPEEMDGWVLAGLSLFLSV</sequence>
<accession>Q9SMH5</accession>
<accession>A8HYT6</accession>
<accession>Q9ZSS7</accession>
<dbReference type="EMBL" id="AJ132478">
    <property type="protein sequence ID" value="CAB56748.2"/>
    <property type="molecule type" value="Genomic_DNA"/>
</dbReference>
<dbReference type="EMBL" id="DS496110">
    <property type="protein sequence ID" value="EDP08405.1"/>
    <property type="molecule type" value="Genomic_DNA"/>
</dbReference>
<dbReference type="EMBL" id="AF096277">
    <property type="protein sequence ID" value="AAC99457.1"/>
    <property type="molecule type" value="mRNA"/>
</dbReference>
<dbReference type="PIR" id="T34340">
    <property type="entry name" value="T34340"/>
</dbReference>
<dbReference type="SMR" id="Q9SMH5"/>
<dbReference type="PaxDb" id="3055-EDP08405"/>
<dbReference type="KEGG" id="cre:CHLRE_06g250300v5"/>
<dbReference type="eggNOG" id="KOG3595">
    <property type="taxonomic scope" value="Eukaryota"/>
</dbReference>
<dbReference type="HOGENOM" id="CLU_000038_7_2_1"/>
<dbReference type="GO" id="GO:0097014">
    <property type="term" value="C:ciliary plasm"/>
    <property type="evidence" value="ECO:0000314"/>
    <property type="project" value="BHF-UCL"/>
</dbReference>
<dbReference type="GO" id="GO:0005868">
    <property type="term" value="C:cytoplasmic dynein complex"/>
    <property type="evidence" value="ECO:0000314"/>
    <property type="project" value="BHF-UCL"/>
</dbReference>
<dbReference type="GO" id="GO:0030286">
    <property type="term" value="C:dynein complex"/>
    <property type="evidence" value="ECO:0000314"/>
    <property type="project" value="BHF-UCL"/>
</dbReference>
<dbReference type="GO" id="GO:0030990">
    <property type="term" value="C:intraciliary transport particle"/>
    <property type="evidence" value="ECO:0000314"/>
    <property type="project" value="BHF-UCL"/>
</dbReference>
<dbReference type="GO" id="GO:0005874">
    <property type="term" value="C:microtubule"/>
    <property type="evidence" value="ECO:0007669"/>
    <property type="project" value="UniProtKB-KW"/>
</dbReference>
<dbReference type="GO" id="GO:0031514">
    <property type="term" value="C:motile cilium"/>
    <property type="evidence" value="ECO:0000314"/>
    <property type="project" value="BHF-UCL"/>
</dbReference>
<dbReference type="GO" id="GO:0005886">
    <property type="term" value="C:plasma membrane"/>
    <property type="evidence" value="ECO:0007669"/>
    <property type="project" value="UniProtKB-KW"/>
</dbReference>
<dbReference type="GO" id="GO:0005524">
    <property type="term" value="F:ATP binding"/>
    <property type="evidence" value="ECO:0007669"/>
    <property type="project" value="UniProtKB-KW"/>
</dbReference>
<dbReference type="GO" id="GO:0016887">
    <property type="term" value="F:ATP hydrolysis activity"/>
    <property type="evidence" value="ECO:0007669"/>
    <property type="project" value="InterPro"/>
</dbReference>
<dbReference type="GO" id="GO:0003774">
    <property type="term" value="F:cytoskeletal motor activity"/>
    <property type="evidence" value="ECO:0000304"/>
    <property type="project" value="BHF-UCL"/>
</dbReference>
<dbReference type="GO" id="GO:0045505">
    <property type="term" value="F:dynein intermediate chain binding"/>
    <property type="evidence" value="ECO:0007669"/>
    <property type="project" value="InterPro"/>
</dbReference>
<dbReference type="GO" id="GO:0045503">
    <property type="term" value="F:dynein light chain binding"/>
    <property type="evidence" value="ECO:0000353"/>
    <property type="project" value="GO_Central"/>
</dbReference>
<dbReference type="GO" id="GO:0051959">
    <property type="term" value="F:dynein light intermediate chain binding"/>
    <property type="evidence" value="ECO:0007669"/>
    <property type="project" value="InterPro"/>
</dbReference>
<dbReference type="GO" id="GO:0008569">
    <property type="term" value="F:minus-end-directed microtubule motor activity"/>
    <property type="evidence" value="ECO:0007669"/>
    <property type="project" value="InterPro"/>
</dbReference>
<dbReference type="GO" id="GO:0072594">
    <property type="term" value="P:establishment of protein localization to organelle"/>
    <property type="evidence" value="ECO:0000315"/>
    <property type="project" value="BHF-UCL"/>
</dbReference>
<dbReference type="GO" id="GO:0007018">
    <property type="term" value="P:microtubule-based movement"/>
    <property type="evidence" value="ECO:0007669"/>
    <property type="project" value="InterPro"/>
</dbReference>
<dbReference type="GO" id="GO:0044458">
    <property type="term" value="P:motile cilium assembly"/>
    <property type="evidence" value="ECO:0000315"/>
    <property type="project" value="BHF-UCL"/>
</dbReference>
<dbReference type="FunFam" id="1.20.920.20:FF:000002">
    <property type="entry name" value="Cytoplasmic dynein 1 heavy chain"/>
    <property type="match status" value="1"/>
</dbReference>
<dbReference type="FunFam" id="3.40.50.300:FF:000706">
    <property type="entry name" value="Cytoplasmic dynein 2 heavy chain 1"/>
    <property type="match status" value="1"/>
</dbReference>
<dbReference type="FunFam" id="3.20.180.20:FF:000002">
    <property type="entry name" value="Cytoplasmic dynein heavy chain 1"/>
    <property type="match status" value="1"/>
</dbReference>
<dbReference type="FunFam" id="3.40.50.300:FF:000071">
    <property type="entry name" value="Cytoplasmic dynein heavy chain 1"/>
    <property type="match status" value="1"/>
</dbReference>
<dbReference type="FunFam" id="1.10.8.720:FF:000003">
    <property type="entry name" value="Cytoplasmic dynein heavy chain 2"/>
    <property type="match status" value="1"/>
</dbReference>
<dbReference type="FunFam" id="1.10.8.710:FF:000001">
    <property type="entry name" value="Dynein axonemal heavy chain 2"/>
    <property type="match status" value="1"/>
</dbReference>
<dbReference type="FunFam" id="1.10.8.1220:FF:000001">
    <property type="entry name" value="Dynein axonemal heavy chain 5"/>
    <property type="match status" value="1"/>
</dbReference>
<dbReference type="FunFam" id="3.40.50.300:FF:000598">
    <property type="entry name" value="Dynein cytoplasmic 2 heavy chain 1"/>
    <property type="match status" value="1"/>
</dbReference>
<dbReference type="FunFam" id="3.40.50.300:FF:001685">
    <property type="entry name" value="Dynein heavy chain, putative"/>
    <property type="match status" value="1"/>
</dbReference>
<dbReference type="Gene3D" id="1.10.8.1220">
    <property type="match status" value="1"/>
</dbReference>
<dbReference type="Gene3D" id="1.10.8.710">
    <property type="match status" value="1"/>
</dbReference>
<dbReference type="Gene3D" id="1.20.1270.280">
    <property type="match status" value="1"/>
</dbReference>
<dbReference type="Gene3D" id="1.20.58.1120">
    <property type="match status" value="1"/>
</dbReference>
<dbReference type="Gene3D" id="1.20.920.20">
    <property type="match status" value="1"/>
</dbReference>
<dbReference type="Gene3D" id="1.20.920.30">
    <property type="match status" value="1"/>
</dbReference>
<dbReference type="Gene3D" id="3.10.490.20">
    <property type="match status" value="1"/>
</dbReference>
<dbReference type="Gene3D" id="6.10.140.1060">
    <property type="match status" value="1"/>
</dbReference>
<dbReference type="Gene3D" id="1.20.140.100">
    <property type="entry name" value="Dynein heavy chain, N-terminal domain 2"/>
    <property type="match status" value="1"/>
</dbReference>
<dbReference type="Gene3D" id="3.20.180.20">
    <property type="entry name" value="Dynein heavy chain, N-terminal domain 2"/>
    <property type="match status" value="1"/>
</dbReference>
<dbReference type="Gene3D" id="3.40.50.300">
    <property type="entry name" value="P-loop containing nucleotide triphosphate hydrolases"/>
    <property type="match status" value="5"/>
</dbReference>
<dbReference type="Gene3D" id="1.10.8.720">
    <property type="entry name" value="Region D6 of dynein motor"/>
    <property type="match status" value="1"/>
</dbReference>
<dbReference type="InterPro" id="IPR003593">
    <property type="entry name" value="AAA+_ATPase"/>
</dbReference>
<dbReference type="InterPro" id="IPR035699">
    <property type="entry name" value="AAA_6"/>
</dbReference>
<dbReference type="InterPro" id="IPR035706">
    <property type="entry name" value="AAA_9"/>
</dbReference>
<dbReference type="InterPro" id="IPR041658">
    <property type="entry name" value="AAA_lid_11"/>
</dbReference>
<dbReference type="InterPro" id="IPR042219">
    <property type="entry name" value="AAA_lid_11_sf"/>
</dbReference>
<dbReference type="InterPro" id="IPR026983">
    <property type="entry name" value="DHC"/>
</dbReference>
<dbReference type="InterPro" id="IPR054354">
    <property type="entry name" value="DYNC2H1-like_lid"/>
</dbReference>
<dbReference type="InterPro" id="IPR049400">
    <property type="entry name" value="DYNC2H1_AAA_dom"/>
</dbReference>
<dbReference type="InterPro" id="IPR042222">
    <property type="entry name" value="Dynein_2_N"/>
</dbReference>
<dbReference type="InterPro" id="IPR043157">
    <property type="entry name" value="Dynein_AAA1S"/>
</dbReference>
<dbReference type="InterPro" id="IPR041228">
    <property type="entry name" value="Dynein_C"/>
</dbReference>
<dbReference type="InterPro" id="IPR043160">
    <property type="entry name" value="Dynein_C_barrel"/>
</dbReference>
<dbReference type="InterPro" id="IPR024743">
    <property type="entry name" value="Dynein_HC_stalk"/>
</dbReference>
<dbReference type="InterPro" id="IPR024317">
    <property type="entry name" value="Dynein_heavy_chain_D4_dom"/>
</dbReference>
<dbReference type="InterPro" id="IPR004273">
    <property type="entry name" value="Dynein_heavy_D6_P-loop"/>
</dbReference>
<dbReference type="InterPro" id="IPR013602">
    <property type="entry name" value="Dynein_heavy_linker"/>
</dbReference>
<dbReference type="InterPro" id="IPR013594">
    <property type="entry name" value="Dynein_heavy_tail"/>
</dbReference>
<dbReference type="InterPro" id="IPR042228">
    <property type="entry name" value="Dynein_linker_3"/>
</dbReference>
<dbReference type="InterPro" id="IPR027417">
    <property type="entry name" value="P-loop_NTPase"/>
</dbReference>
<dbReference type="PANTHER" id="PTHR45703:SF22">
    <property type="entry name" value="DYNEIN CYTOPLASMIC 2 HEAVY CHAIN 1"/>
    <property type="match status" value="1"/>
</dbReference>
<dbReference type="PANTHER" id="PTHR45703">
    <property type="entry name" value="DYNEIN HEAVY CHAIN"/>
    <property type="match status" value="1"/>
</dbReference>
<dbReference type="Pfam" id="PF12774">
    <property type="entry name" value="AAA_6"/>
    <property type="match status" value="1"/>
</dbReference>
<dbReference type="Pfam" id="PF12775">
    <property type="entry name" value="AAA_7"/>
    <property type="match status" value="1"/>
</dbReference>
<dbReference type="Pfam" id="PF12780">
    <property type="entry name" value="AAA_8"/>
    <property type="match status" value="1"/>
</dbReference>
<dbReference type="Pfam" id="PF12781">
    <property type="entry name" value="AAA_9"/>
    <property type="match status" value="1"/>
</dbReference>
<dbReference type="Pfam" id="PF18198">
    <property type="entry name" value="AAA_lid_11"/>
    <property type="match status" value="1"/>
</dbReference>
<dbReference type="Pfam" id="PF08385">
    <property type="entry name" value="DHC_N1"/>
    <property type="match status" value="1"/>
</dbReference>
<dbReference type="Pfam" id="PF08393">
    <property type="entry name" value="DHC_N2"/>
    <property type="match status" value="1"/>
</dbReference>
<dbReference type="Pfam" id="PF22597">
    <property type="entry name" value="DYN_lid"/>
    <property type="match status" value="1"/>
</dbReference>
<dbReference type="Pfam" id="PF21264">
    <property type="entry name" value="DYNC2H1_AAA_dom"/>
    <property type="match status" value="1"/>
</dbReference>
<dbReference type="Pfam" id="PF18199">
    <property type="entry name" value="Dynein_C"/>
    <property type="match status" value="1"/>
</dbReference>
<dbReference type="Pfam" id="PF03028">
    <property type="entry name" value="Dynein_heavy"/>
    <property type="match status" value="1"/>
</dbReference>
<dbReference type="Pfam" id="PF12777">
    <property type="entry name" value="MT"/>
    <property type="match status" value="1"/>
</dbReference>
<dbReference type="SMART" id="SM00382">
    <property type="entry name" value="AAA"/>
    <property type="match status" value="3"/>
</dbReference>
<dbReference type="SUPFAM" id="SSF52540">
    <property type="entry name" value="P-loop containing nucleoside triphosphate hydrolases"/>
    <property type="match status" value="4"/>
</dbReference>
<protein>
    <recommendedName>
        <fullName>Cytoplasmic dynein 2 heavy chain 1</fullName>
    </recommendedName>
    <alternativeName>
        <fullName>Cytoplasmic dynein heavy chain 1b</fullName>
        <shortName>cDHC1b</shortName>
    </alternativeName>
</protein>
<evidence type="ECO:0000250" key="1"/>
<evidence type="ECO:0000255" key="2"/>
<evidence type="ECO:0000269" key="3">
    <source>
    </source>
</evidence>
<evidence type="ECO:0000269" key="4">
    <source>
    </source>
</evidence>
<evidence type="ECO:0000269" key="5">
    <source>
    </source>
</evidence>
<evidence type="ECO:0000269" key="6">
    <source>
    </source>
</evidence>
<evidence type="ECO:0000269" key="7">
    <source>
    </source>
</evidence>
<evidence type="ECO:0000305" key="8"/>
<reference key="1">
    <citation type="journal article" date="1999" name="Mol. Biol. Cell">
        <title>Cytoplasmic dynein heavy chain 1b is required for flagellar assembly in Chlamydomonas.</title>
        <authorList>
            <person name="Porter M.E."/>
            <person name="Bower R."/>
            <person name="Knott J.A."/>
            <person name="Byrd P."/>
            <person name="Dentler W.L."/>
        </authorList>
    </citation>
    <scope>NUCLEOTIDE SEQUENCE [GENOMIC DNA]</scope>
    <scope>FUNCTION</scope>
    <scope>DISRUPTION PHENOTYPE</scope>
    <scope>INDUCTION</scope>
    <source>
        <strain>21gr / CC-1690</strain>
    </source>
</reference>
<reference key="2">
    <citation type="journal article" date="2003" name="Mol. Biol. Cell">
        <title>A novel dynein light intermediate chain colocalizes with the retrograde motor for intraflagellar transport at sites of axoneme assembly in chlamydomonas and mammalian cells.</title>
        <authorList>
            <person name="Perrone C.A."/>
            <person name="Tritschler D."/>
            <person name="Taulman P."/>
            <person name="Bower R."/>
            <person name="Yoder B.K."/>
            <person name="Porter M.E."/>
        </authorList>
    </citation>
    <scope>SEQUENCE REVISION</scope>
    <scope>FUNCTION</scope>
    <scope>INTERACTION WITH D1BLIC</scope>
    <scope>SUBCELLULAR LOCATION</scope>
    <scope>TOPOLOGY</scope>
    <source>
        <strain>21gr / CC-1690</strain>
    </source>
</reference>
<reference key="3">
    <citation type="journal article" date="2007" name="Science">
        <title>The Chlamydomonas genome reveals the evolution of key animal and plant functions.</title>
        <authorList>
            <person name="Merchant S.S."/>
            <person name="Prochnik S.E."/>
            <person name="Vallon O."/>
            <person name="Harris E.H."/>
            <person name="Karpowicz S.J."/>
            <person name="Witman G.B."/>
            <person name="Terry A."/>
            <person name="Salamov A."/>
            <person name="Fritz-Laylin L.K."/>
            <person name="Marechal-Drouard L."/>
            <person name="Marshall W.F."/>
            <person name="Qu L.H."/>
            <person name="Nelson D.R."/>
            <person name="Sanderfoot A.A."/>
            <person name="Spalding M.H."/>
            <person name="Kapitonov V.V."/>
            <person name="Ren Q."/>
            <person name="Ferris P."/>
            <person name="Lindquist E."/>
            <person name="Shapiro H."/>
            <person name="Lucas S.M."/>
            <person name="Grimwood J."/>
            <person name="Schmutz J."/>
            <person name="Cardol P."/>
            <person name="Cerutti H."/>
            <person name="Chanfreau G."/>
            <person name="Chen C.L."/>
            <person name="Cognat V."/>
            <person name="Croft M.T."/>
            <person name="Dent R."/>
            <person name="Dutcher S."/>
            <person name="Fernandez E."/>
            <person name="Fukuzawa H."/>
            <person name="Gonzalez-Ballester D."/>
            <person name="Gonzalez-Halphen D."/>
            <person name="Hallmann A."/>
            <person name="Hanikenne M."/>
            <person name="Hippler M."/>
            <person name="Inwood W."/>
            <person name="Jabbari K."/>
            <person name="Kalanon M."/>
            <person name="Kuras R."/>
            <person name="Lefebvre P.A."/>
            <person name="Lemaire S.D."/>
            <person name="Lobanov A.V."/>
            <person name="Lohr M."/>
            <person name="Manuell A."/>
            <person name="Meier I."/>
            <person name="Mets L."/>
            <person name="Mittag M."/>
            <person name="Mittelmeier T."/>
            <person name="Moroney J.V."/>
            <person name="Moseley J."/>
            <person name="Napoli C."/>
            <person name="Nedelcu A.M."/>
            <person name="Niyogi K."/>
            <person name="Novoselov S.V."/>
            <person name="Paulsen I.T."/>
            <person name="Pazour G.J."/>
            <person name="Purton S."/>
            <person name="Ral J.P."/>
            <person name="Riano-Pachon D.M."/>
            <person name="Riekhof W."/>
            <person name="Rymarquis L."/>
            <person name="Schroda M."/>
            <person name="Stern D."/>
            <person name="Umen J."/>
            <person name="Willows R."/>
            <person name="Wilson N."/>
            <person name="Zimmer S.L."/>
            <person name="Allmer J."/>
            <person name="Balk J."/>
            <person name="Bisova K."/>
            <person name="Chen C.J."/>
            <person name="Elias M."/>
            <person name="Gendler K."/>
            <person name="Hauser C."/>
            <person name="Lamb M.R."/>
            <person name="Ledford H."/>
            <person name="Long J.C."/>
            <person name="Minagawa J."/>
            <person name="Page M.D."/>
            <person name="Pan J."/>
            <person name="Pootakham W."/>
            <person name="Roje S."/>
            <person name="Rose A."/>
            <person name="Stahlberg E."/>
            <person name="Terauchi A.M."/>
            <person name="Yang P."/>
            <person name="Ball S."/>
            <person name="Bowler C."/>
            <person name="Dieckmann C.L."/>
            <person name="Gladyshev V.N."/>
            <person name="Green P."/>
            <person name="Jorgensen R."/>
            <person name="Mayfield S."/>
            <person name="Mueller-Roeber B."/>
            <person name="Rajamani S."/>
            <person name="Sayre R.T."/>
            <person name="Brokstein P."/>
            <person name="Dubchak I."/>
            <person name="Goodstein D."/>
            <person name="Hornick L."/>
            <person name="Huang Y.W."/>
            <person name="Jhaveri J."/>
            <person name="Luo Y."/>
            <person name="Martinez D."/>
            <person name="Ngau W.C."/>
            <person name="Otillar B."/>
            <person name="Poliakov A."/>
            <person name="Porter A."/>
            <person name="Szajkowski L."/>
            <person name="Werner G."/>
            <person name="Zhou K."/>
            <person name="Grigoriev I.V."/>
            <person name="Rokhsar D.S."/>
            <person name="Grossman A.R."/>
        </authorList>
    </citation>
    <scope>NUCLEOTIDE SEQUENCE [LARGE SCALE GENOMIC DNA]</scope>
    <source>
        <strain>CC-503</strain>
        <strain>cw92</strain>
    </source>
</reference>
<reference key="4">
    <citation type="journal article" date="1999" name="J. Cell Biol.">
        <title>The DHC1b (DHC2) isoform of cytoplasmic dynein is required for flagellar assembly.</title>
        <authorList>
            <person name="Pazour G.J."/>
            <person name="Dickert B.L."/>
            <person name="Witman G.B."/>
        </authorList>
    </citation>
    <scope>NUCLEOTIDE SEQUENCE [MRNA] OF 992-2189</scope>
    <scope>FUNCTION</scope>
    <scope>DISRUPTION PHENOTYPE</scope>
    <scope>SUBCELLULAR LOCATION</scope>
    <scope>INDUCTION</scope>
</reference>
<reference key="5">
    <citation type="journal article" date="2004" name="Mol. Biol. Cell">
        <title>A dynein light intermediate chain, D1bLIC, is required for retrograde intraflagellar transport.</title>
        <authorList>
            <person name="Hou Y."/>
            <person name="Pazour G.J."/>
            <person name="Witman G.B."/>
        </authorList>
    </citation>
    <scope>INTERACTION WITH D1BLIC</scope>
    <scope>SUBCELLULAR LOCATION</scope>
    <scope>TOPOLOGY</scope>
</reference>
<reference key="6">
    <citation type="journal article" date="2007" name="J. Cell Sci.">
        <title>Chlamydomonas FAP133 is a dynein intermediate chain associated with the retrograde intraflagellar transport motor.</title>
        <authorList>
            <person name="Rompolas P."/>
            <person name="Pedersen L.B."/>
            <person name="Patel-King R.S."/>
            <person name="King S.M."/>
        </authorList>
    </citation>
    <scope>INTERACTION WITH D1BLIC; FAP133; FLA10 AND LC8</scope>
</reference>
<name>DYHC2_CHLRE</name>
<gene>
    <name type="primary">DHC1B</name>
    <name type="synonym">DHC2</name>
    <name type="ORF">CHLREDRAFT_24009</name>
</gene>
<feature type="chain" id="PRO_0000318747" description="Cytoplasmic dynein 2 heavy chain 1">
    <location>
        <begin position="1"/>
        <end position="4334"/>
    </location>
</feature>
<feature type="region of interest" description="Stem" evidence="1">
    <location>
        <begin position="1"/>
        <end position="1704"/>
    </location>
</feature>
<feature type="region of interest" description="AAA 1" evidence="1">
    <location>
        <begin position="1705"/>
        <end position="1929"/>
    </location>
</feature>
<feature type="region of interest" description="AAA 2" evidence="1">
    <location>
        <begin position="1996"/>
        <end position="2211"/>
    </location>
</feature>
<feature type="region of interest" description="AAA 3" evidence="1">
    <location>
        <begin position="2299"/>
        <end position="2544"/>
    </location>
</feature>
<feature type="region of interest" description="AAA 4" evidence="1">
    <location>
        <begin position="2641"/>
        <end position="2882"/>
    </location>
</feature>
<feature type="region of interest" description="Stalk" evidence="1">
    <location>
        <begin position="2897"/>
        <end position="3185"/>
    </location>
</feature>
<feature type="region of interest" description="AAA 5" evidence="1">
    <location>
        <begin position="3260"/>
        <end position="3492"/>
    </location>
</feature>
<feature type="region of interest" description="AAA 6" evidence="1">
    <location>
        <begin position="3701"/>
        <end position="3917"/>
    </location>
</feature>
<feature type="coiled-coil region" evidence="2">
    <location>
        <begin position="1026"/>
        <end position="1097"/>
    </location>
</feature>
<feature type="coiled-coil region" evidence="2">
    <location>
        <begin position="2930"/>
        <end position="2998"/>
    </location>
</feature>
<feature type="coiled-coil region" evidence="2">
    <location>
        <begin position="3120"/>
        <end position="3199"/>
    </location>
</feature>
<feature type="binding site" evidence="2">
    <location>
        <begin position="150"/>
        <end position="157"/>
    </location>
    <ligand>
        <name>ATP</name>
        <dbReference type="ChEBI" id="CHEBI:30616"/>
    </ligand>
</feature>
<feature type="binding site" evidence="2">
    <location>
        <begin position="1743"/>
        <end position="1750"/>
    </location>
    <ligand>
        <name>ATP</name>
        <dbReference type="ChEBI" id="CHEBI:30616"/>
    </ligand>
</feature>
<feature type="binding site" evidence="2">
    <location>
        <begin position="2034"/>
        <end position="2041"/>
    </location>
    <ligand>
        <name>ATP</name>
        <dbReference type="ChEBI" id="CHEBI:30616"/>
    </ligand>
</feature>
<feature type="binding site" evidence="2">
    <location>
        <begin position="2334"/>
        <end position="2341"/>
    </location>
    <ligand>
        <name>ATP</name>
        <dbReference type="ChEBI" id="CHEBI:30616"/>
    </ligand>
</feature>
<feature type="binding site" evidence="2">
    <location>
        <begin position="2679"/>
        <end position="2686"/>
    </location>
    <ligand>
        <name>ATP</name>
        <dbReference type="ChEBI" id="CHEBI:30616"/>
    </ligand>
</feature>
<feature type="sequence conflict" description="In Ref. 4; AAC99457." evidence="8" ref="4">
    <original>C</original>
    <variation>L</variation>
    <location>
        <position position="2005"/>
    </location>
</feature>
<feature type="sequence conflict" description="In Ref. 3; EDP08405." evidence="8" ref="3">
    <location>
        <position position="3762"/>
    </location>
</feature>
<proteinExistence type="evidence at protein level"/>
<comment type="function">
    <text evidence="3 4 7">May function as a motor for intraflagellar retrograde transport. Functions in flagellar biogenesis.</text>
</comment>
<comment type="subunit">
    <text evidence="4 5 6">The cytoplasmic dynein complex 2 is probably composed by a DHC1B homodimer and a number of D1BLIC light intermediate chains. Interacts with FAP133, FLA10 and LC8.</text>
</comment>
<comment type="subcellular location">
    <subcellularLocation>
        <location evidence="4 7">Cytoplasm</location>
        <location evidence="4 7">Cytoskeleton</location>
        <location evidence="4 7">Flagellum basal body</location>
    </subcellularLocation>
    <subcellularLocation>
        <location evidence="8">Cell projection</location>
        <location evidence="8">Cilium</location>
        <location evidence="8">Flagellum membrane</location>
        <topology evidence="8">Peripheral membrane protein</topology>
        <orientation>Cytoplasmic side</orientation>
    </subcellularLocation>
    <subcellularLocation>
        <location evidence="4 7">Cytoplasm</location>
    </subcellularLocation>
</comment>
<comment type="induction">
    <text evidence="3 7">Up-regulated during flagellum biogenesis.</text>
</comment>
<comment type="disruption phenotype">
    <text evidence="3 7">Algae display short flagellar stumps filled with aberrant microtubules, raft-like particles and other amorphous material.</text>
</comment>
<comment type="similarity">
    <text evidence="8">Belongs to the dynein heavy chain family.</text>
</comment>
<keyword id="KW-0067">ATP-binding</keyword>
<keyword id="KW-1003">Cell membrane</keyword>
<keyword id="KW-0966">Cell projection</keyword>
<keyword id="KW-0969">Cilium</keyword>
<keyword id="KW-0970">Cilium biogenesis/degradation</keyword>
<keyword id="KW-0175">Coiled coil</keyword>
<keyword id="KW-0963">Cytoplasm</keyword>
<keyword id="KW-0206">Cytoskeleton</keyword>
<keyword id="KW-0217">Developmental protein</keyword>
<keyword id="KW-0243">Dynein</keyword>
<keyword id="KW-0282">Flagellum</keyword>
<keyword id="KW-0472">Membrane</keyword>
<keyword id="KW-0493">Microtubule</keyword>
<keyword id="KW-0505">Motor protein</keyword>
<keyword id="KW-0547">Nucleotide-binding</keyword>